<name>TAL_GEOTN</name>
<protein>
    <recommendedName>
        <fullName evidence="1">Probable transaldolase</fullName>
        <ecNumber evidence="1">2.2.1.2</ecNumber>
    </recommendedName>
</protein>
<evidence type="ECO:0000255" key="1">
    <source>
        <dbReference type="HAMAP-Rule" id="MF_00494"/>
    </source>
</evidence>
<organism>
    <name type="scientific">Geobacillus thermodenitrificans (strain NG80-2)</name>
    <dbReference type="NCBI Taxonomy" id="420246"/>
    <lineage>
        <taxon>Bacteria</taxon>
        <taxon>Bacillati</taxon>
        <taxon>Bacillota</taxon>
        <taxon>Bacilli</taxon>
        <taxon>Bacillales</taxon>
        <taxon>Anoxybacillaceae</taxon>
        <taxon>Geobacillus</taxon>
    </lineage>
</organism>
<reference key="1">
    <citation type="journal article" date="2007" name="Proc. Natl. Acad. Sci. U.S.A.">
        <title>Genome and proteome of long-chain alkane degrading Geobacillus thermodenitrificans NG80-2 isolated from a deep-subsurface oil reservoir.</title>
        <authorList>
            <person name="Feng L."/>
            <person name="Wang W."/>
            <person name="Cheng J."/>
            <person name="Ren Y."/>
            <person name="Zhao G."/>
            <person name="Gao C."/>
            <person name="Tang Y."/>
            <person name="Liu X."/>
            <person name="Han W."/>
            <person name="Peng X."/>
            <person name="Liu R."/>
            <person name="Wang L."/>
        </authorList>
    </citation>
    <scope>NUCLEOTIDE SEQUENCE [LARGE SCALE GENOMIC DNA]</scope>
    <source>
        <strain>NG80-2</strain>
    </source>
</reference>
<keyword id="KW-0963">Cytoplasm</keyword>
<keyword id="KW-0570">Pentose shunt</keyword>
<keyword id="KW-0704">Schiff base</keyword>
<keyword id="KW-0808">Transferase</keyword>
<proteinExistence type="inferred from homology"/>
<feature type="chain" id="PRO_1000060466" description="Probable transaldolase">
    <location>
        <begin position="1"/>
        <end position="213"/>
    </location>
</feature>
<feature type="active site" description="Schiff-base intermediate with substrate" evidence="1">
    <location>
        <position position="83"/>
    </location>
</feature>
<accession>A4ITL5</accession>
<gene>
    <name evidence="1" type="primary">tal</name>
    <name type="ordered locus">GTNG_3330</name>
</gene>
<sequence length="213" mass="23134">MKFFIDTANLEEIKHAHELGILAGVTTNPSLVAKENVSFHDRLREITSIVSGSVSAEVISTDAPGMIEEGEELAKIAPNITIKVPMTPEGLKAVKAFSEKGIKTNVTLVFTANQALLAARAGATYVSPFLGRLDDIGHNGLELISTIADIFNIHGIETEIIAASIRHPHHVTEAALRGAHIATVPYKVLMQLFNHPLTDQGIEKFLADWNRQQ</sequence>
<dbReference type="EC" id="2.2.1.2" evidence="1"/>
<dbReference type="EMBL" id="CP000557">
    <property type="protein sequence ID" value="ABO68669.1"/>
    <property type="molecule type" value="Genomic_DNA"/>
</dbReference>
<dbReference type="RefSeq" id="WP_008880719.1">
    <property type="nucleotide sequence ID" value="NC_009328.1"/>
</dbReference>
<dbReference type="SMR" id="A4ITL5"/>
<dbReference type="GeneID" id="87622560"/>
<dbReference type="KEGG" id="gtn:GTNG_3330"/>
<dbReference type="eggNOG" id="COG0176">
    <property type="taxonomic scope" value="Bacteria"/>
</dbReference>
<dbReference type="HOGENOM" id="CLU_079764_0_0_9"/>
<dbReference type="UniPathway" id="UPA00115">
    <property type="reaction ID" value="UER00414"/>
</dbReference>
<dbReference type="Proteomes" id="UP000001578">
    <property type="component" value="Chromosome"/>
</dbReference>
<dbReference type="GO" id="GO:0005737">
    <property type="term" value="C:cytoplasm"/>
    <property type="evidence" value="ECO:0007669"/>
    <property type="project" value="UniProtKB-SubCell"/>
</dbReference>
<dbReference type="GO" id="GO:0016832">
    <property type="term" value="F:aldehyde-lyase activity"/>
    <property type="evidence" value="ECO:0007669"/>
    <property type="project" value="InterPro"/>
</dbReference>
<dbReference type="GO" id="GO:0004801">
    <property type="term" value="F:transaldolase activity"/>
    <property type="evidence" value="ECO:0007669"/>
    <property type="project" value="UniProtKB-UniRule"/>
</dbReference>
<dbReference type="GO" id="GO:0005975">
    <property type="term" value="P:carbohydrate metabolic process"/>
    <property type="evidence" value="ECO:0007669"/>
    <property type="project" value="InterPro"/>
</dbReference>
<dbReference type="GO" id="GO:0006098">
    <property type="term" value="P:pentose-phosphate shunt"/>
    <property type="evidence" value="ECO:0007669"/>
    <property type="project" value="UniProtKB-UniRule"/>
</dbReference>
<dbReference type="CDD" id="cd00956">
    <property type="entry name" value="Transaldolase_FSA"/>
    <property type="match status" value="1"/>
</dbReference>
<dbReference type="FunFam" id="3.20.20.70:FF:000018">
    <property type="entry name" value="Probable transaldolase"/>
    <property type="match status" value="1"/>
</dbReference>
<dbReference type="Gene3D" id="3.20.20.70">
    <property type="entry name" value="Aldolase class I"/>
    <property type="match status" value="1"/>
</dbReference>
<dbReference type="HAMAP" id="MF_00494">
    <property type="entry name" value="Transaldolase_3b"/>
    <property type="match status" value="1"/>
</dbReference>
<dbReference type="InterPro" id="IPR013785">
    <property type="entry name" value="Aldolase_TIM"/>
</dbReference>
<dbReference type="InterPro" id="IPR001585">
    <property type="entry name" value="TAL/FSA"/>
</dbReference>
<dbReference type="InterPro" id="IPR022999">
    <property type="entry name" value="Transaldolase_3B"/>
</dbReference>
<dbReference type="InterPro" id="IPR004731">
    <property type="entry name" value="Transaldolase_3B/F6P_aldolase"/>
</dbReference>
<dbReference type="InterPro" id="IPR018225">
    <property type="entry name" value="Transaldolase_AS"/>
</dbReference>
<dbReference type="InterPro" id="IPR033919">
    <property type="entry name" value="TSA/FSA_arc/bac"/>
</dbReference>
<dbReference type="NCBIfam" id="TIGR00875">
    <property type="entry name" value="fsa_talC_mipB"/>
    <property type="match status" value="1"/>
</dbReference>
<dbReference type="PANTHER" id="PTHR10683">
    <property type="entry name" value="TRANSALDOLASE"/>
    <property type="match status" value="1"/>
</dbReference>
<dbReference type="PANTHER" id="PTHR10683:SF36">
    <property type="entry name" value="TRANSALDOLASE"/>
    <property type="match status" value="1"/>
</dbReference>
<dbReference type="Pfam" id="PF00923">
    <property type="entry name" value="TAL_FSA"/>
    <property type="match status" value="1"/>
</dbReference>
<dbReference type="SUPFAM" id="SSF51569">
    <property type="entry name" value="Aldolase"/>
    <property type="match status" value="1"/>
</dbReference>
<dbReference type="PROSITE" id="PS01054">
    <property type="entry name" value="TRANSALDOLASE_1"/>
    <property type="match status" value="1"/>
</dbReference>
<dbReference type="PROSITE" id="PS00958">
    <property type="entry name" value="TRANSALDOLASE_2"/>
    <property type="match status" value="1"/>
</dbReference>
<comment type="function">
    <text evidence="1">Transaldolase is important for the balance of metabolites in the pentose-phosphate pathway.</text>
</comment>
<comment type="catalytic activity">
    <reaction evidence="1">
        <text>D-sedoheptulose 7-phosphate + D-glyceraldehyde 3-phosphate = D-erythrose 4-phosphate + beta-D-fructose 6-phosphate</text>
        <dbReference type="Rhea" id="RHEA:17053"/>
        <dbReference type="ChEBI" id="CHEBI:16897"/>
        <dbReference type="ChEBI" id="CHEBI:57483"/>
        <dbReference type="ChEBI" id="CHEBI:57634"/>
        <dbReference type="ChEBI" id="CHEBI:59776"/>
        <dbReference type="EC" id="2.2.1.2"/>
    </reaction>
</comment>
<comment type="pathway">
    <text evidence="1">Carbohydrate degradation; pentose phosphate pathway; D-glyceraldehyde 3-phosphate and beta-D-fructose 6-phosphate from D-ribose 5-phosphate and D-xylulose 5-phosphate (non-oxidative stage): step 2/3.</text>
</comment>
<comment type="subcellular location">
    <subcellularLocation>
        <location evidence="1">Cytoplasm</location>
    </subcellularLocation>
</comment>
<comment type="similarity">
    <text evidence="1">Belongs to the transaldolase family. Type 3B subfamily.</text>
</comment>